<protein>
    <recommendedName>
        <fullName>iraD leader peptide</fullName>
    </recommendedName>
</protein>
<gene>
    <name type="primary">idlP</name>
    <name evidence="2" type="synonym">orf27</name>
    <name type="ordered locus">b4722</name>
</gene>
<dbReference type="EMBL" id="U00096">
    <property type="protein sequence ID" value="AYC08260.1"/>
    <property type="molecule type" value="Genomic_DNA"/>
</dbReference>
<dbReference type="FunCoup" id="P0DPC6">
    <property type="interactions" value="1"/>
</dbReference>
<dbReference type="EnsemblBacteria" id="AYC08260">
    <property type="protein sequence ID" value="AYC08260"/>
    <property type="gene ID" value="b4722"/>
</dbReference>
<dbReference type="InParanoid" id="P0DPC6"/>
<dbReference type="BioCyc" id="EcoCyc:MONOMER0-4390"/>
<dbReference type="PRO" id="PR:P0DPC6"/>
<dbReference type="Proteomes" id="UP000000625">
    <property type="component" value="Chromosome"/>
</dbReference>
<dbReference type="GO" id="GO:0006417">
    <property type="term" value="P:regulation of translation"/>
    <property type="evidence" value="ECO:0007669"/>
    <property type="project" value="UniProtKB-KW"/>
</dbReference>
<keyword id="KW-0428">Leader peptide</keyword>
<keyword id="KW-1185">Reference proteome</keyword>
<keyword id="KW-0810">Translation regulation</keyword>
<comment type="function">
    <text evidence="1">A short protein whose stop codon overlaps with the start codon of downstream iraD; its mRNA secondary structure is predicted to fold and sequester the Shine-Dalgarno sequence of iraD. When this protein is expressed the downstream iraD is also expressed due to ribosomal coupling (PubMed:28851853).</text>
</comment>
<comment type="induction">
    <text evidence="1">Expressed at high levels during late logarithmic and stationary growth (at protein level) (PubMed:28851853). Translation is repressed by CsrA (PubMed:28851853).</text>
</comment>
<comment type="disruption phenotype">
    <text evidence="1">Decreased expression of downstream gene iraD (PubMed:28851853).</text>
</comment>
<reference key="1">
    <citation type="journal article" date="1997" name="Science">
        <title>The complete genome sequence of Escherichia coli K-12.</title>
        <authorList>
            <person name="Blattner F.R."/>
            <person name="Plunkett G. III"/>
            <person name="Bloch C.A."/>
            <person name="Perna N.T."/>
            <person name="Burland V."/>
            <person name="Riley M."/>
            <person name="Collado-Vides J."/>
            <person name="Glasner J.D."/>
            <person name="Rode C.K."/>
            <person name="Mayhew G.F."/>
            <person name="Gregor J."/>
            <person name="Davis N.W."/>
            <person name="Kirkpatrick H.A."/>
            <person name="Goeden M.A."/>
            <person name="Rose D.J."/>
            <person name="Mau B."/>
            <person name="Shao Y."/>
        </authorList>
    </citation>
    <scope>NUCLEOTIDE SEQUENCE [LARGE SCALE GENOMIC DNA]</scope>
    <source>
        <strain>K12 / MG1655 / ATCC 47076</strain>
    </source>
</reference>
<reference key="2">
    <citation type="journal article" date="2017" name="MBio">
        <title>Translational repression of the RpoS antiadapter IraD by CsrA is mediated via translational coupling to a short upstream open reading frame.</title>
        <authorList>
            <person name="Park H."/>
            <person name="McGibbon L.C."/>
            <person name="Potts A.H."/>
            <person name="Yakhnin H."/>
            <person name="Romeo T."/>
            <person name="Babitzke P."/>
        </authorList>
    </citation>
    <scope>IDENTIFICATION</scope>
    <scope>FUNCTION</scope>
    <scope>INDUCTION</scope>
    <scope>DISRUPTION PHENOTYPE</scope>
    <source>
        <strain>K12 / CF7789</strain>
    </source>
</reference>
<feature type="chain" id="PRO_0000442644" description="iraD leader peptide">
    <location>
        <begin position="1"/>
        <end position="27"/>
    </location>
</feature>
<name>IDLP_ECOLI</name>
<organism>
    <name type="scientific">Escherichia coli (strain K12)</name>
    <dbReference type="NCBI Taxonomy" id="83333"/>
    <lineage>
        <taxon>Bacteria</taxon>
        <taxon>Pseudomonadati</taxon>
        <taxon>Pseudomonadota</taxon>
        <taxon>Gammaproteobacteria</taxon>
        <taxon>Enterobacterales</taxon>
        <taxon>Enterobacteriaceae</taxon>
        <taxon>Escherichia</taxon>
    </lineage>
</organism>
<proteinExistence type="evidence at protein level"/>
<evidence type="ECO:0000269" key="1">
    <source>
    </source>
</evidence>
<evidence type="ECO:0000303" key="2">
    <source>
    </source>
</evidence>
<sequence length="27" mass="3016">MENEHQYSGARCSGQAAYVAKRQECAK</sequence>
<accession>P0DPC6</accession>
<accession>A0A385XJQ3</accession>